<feature type="chain" id="PRO_0000395176" description="Dipeptide and tripeptide permease A">
    <location>
        <begin position="1"/>
        <end position="502"/>
    </location>
</feature>
<feature type="topological domain" description="Cytoplasmic" evidence="1">
    <location>
        <begin position="1"/>
        <end position="35"/>
    </location>
</feature>
<feature type="transmembrane region" description="Helical" evidence="1">
    <location>
        <begin position="36"/>
        <end position="56"/>
    </location>
</feature>
<feature type="topological domain" description="Periplasmic" evidence="1">
    <location>
        <begin position="57"/>
        <end position="60"/>
    </location>
</feature>
<feature type="transmembrane region" description="Helical" evidence="1">
    <location>
        <begin position="61"/>
        <end position="81"/>
    </location>
</feature>
<feature type="topological domain" description="Cytoplasmic" evidence="1">
    <location>
        <begin position="82"/>
        <end position="90"/>
    </location>
</feature>
<feature type="transmembrane region" description="Helical" evidence="1">
    <location>
        <begin position="91"/>
        <end position="111"/>
    </location>
</feature>
<feature type="topological domain" description="Periplasmic" evidence="1">
    <location>
        <position position="112"/>
    </location>
</feature>
<feature type="transmembrane region" description="Helical" evidence="1">
    <location>
        <begin position="113"/>
        <end position="133"/>
    </location>
</feature>
<feature type="topological domain" description="Cytoplasmic" evidence="1">
    <location>
        <begin position="134"/>
        <end position="154"/>
    </location>
</feature>
<feature type="transmembrane region" description="Helical" evidence="1">
    <location>
        <begin position="155"/>
        <end position="175"/>
    </location>
</feature>
<feature type="topological domain" description="Periplasmic" evidence="1">
    <location>
        <begin position="176"/>
        <end position="179"/>
    </location>
</feature>
<feature type="transmembrane region" description="Helical" evidence="1">
    <location>
        <begin position="180"/>
        <end position="200"/>
    </location>
</feature>
<feature type="topological domain" description="Cytoplasmic" evidence="1">
    <location>
        <begin position="201"/>
        <end position="218"/>
    </location>
</feature>
<feature type="transmembrane region" description="Helical" evidence="1">
    <location>
        <begin position="219"/>
        <end position="239"/>
    </location>
</feature>
<feature type="topological domain" description="Periplasmic" evidence="1">
    <location>
        <begin position="240"/>
        <end position="247"/>
    </location>
</feature>
<feature type="transmembrane region" description="Helical" evidence="1">
    <location>
        <begin position="248"/>
        <end position="268"/>
    </location>
</feature>
<feature type="topological domain" description="Cytoplasmic" evidence="1">
    <location>
        <begin position="269"/>
        <end position="275"/>
    </location>
</feature>
<feature type="transmembrane region" description="Helical" evidence="1">
    <location>
        <begin position="276"/>
        <end position="296"/>
    </location>
</feature>
<feature type="topological domain" description="Periplasmic" evidence="1">
    <location>
        <begin position="297"/>
        <end position="321"/>
    </location>
</feature>
<feature type="transmembrane region" description="Helical" evidence="1">
    <location>
        <begin position="322"/>
        <end position="342"/>
    </location>
</feature>
<feature type="topological domain" description="Cytoplasmic" evidence="1">
    <location>
        <begin position="343"/>
        <end position="353"/>
    </location>
</feature>
<feature type="transmembrane region" description="Helical" evidence="1">
    <location>
        <begin position="354"/>
        <end position="374"/>
    </location>
</feature>
<feature type="topological domain" description="Periplasmic" evidence="1">
    <location>
        <begin position="375"/>
        <end position="384"/>
    </location>
</feature>
<feature type="transmembrane region" description="Helical" evidence="1">
    <location>
        <begin position="385"/>
        <end position="405"/>
    </location>
</feature>
<feature type="topological domain" description="Cytoplasmic" evidence="1">
    <location>
        <begin position="406"/>
        <end position="415"/>
    </location>
</feature>
<feature type="transmembrane region" description="Helical" evidence="1">
    <location>
        <begin position="416"/>
        <end position="436"/>
    </location>
</feature>
<feature type="topological domain" description="Periplasmic" evidence="1">
    <location>
        <begin position="437"/>
        <end position="460"/>
    </location>
</feature>
<feature type="transmembrane region" description="Helical" evidence="1">
    <location>
        <begin position="461"/>
        <end position="481"/>
    </location>
</feature>
<feature type="topological domain" description="Cytoplasmic" evidence="1">
    <location>
        <begin position="482"/>
        <end position="502"/>
    </location>
</feature>
<protein>
    <recommendedName>
        <fullName evidence="1">Dipeptide and tripeptide permease A</fullName>
    </recommendedName>
</protein>
<name>DTPA_ENT38</name>
<gene>
    <name evidence="1" type="primary">dtpA</name>
    <name type="ordered locus">Ent638_1814</name>
</gene>
<organism>
    <name type="scientific">Enterobacter sp. (strain 638)</name>
    <dbReference type="NCBI Taxonomy" id="399742"/>
    <lineage>
        <taxon>Bacteria</taxon>
        <taxon>Pseudomonadati</taxon>
        <taxon>Pseudomonadota</taxon>
        <taxon>Gammaproteobacteria</taxon>
        <taxon>Enterobacterales</taxon>
        <taxon>Enterobacteriaceae</taxon>
        <taxon>Enterobacter</taxon>
    </lineage>
</organism>
<comment type="function">
    <text evidence="1">Proton-dependent permease that transports di- and tripeptides.</text>
</comment>
<comment type="subcellular location">
    <subcellularLocation>
        <location evidence="1">Cell inner membrane</location>
        <topology evidence="1">Multi-pass membrane protein</topology>
    </subcellularLocation>
</comment>
<comment type="similarity">
    <text evidence="1">Belongs to the major facilitator superfamily. Proton-dependent oligopeptide transporter (POT/PTR) (TC 2.A.17) family. DtpA subfamily.</text>
</comment>
<keyword id="KW-0997">Cell inner membrane</keyword>
<keyword id="KW-1003">Cell membrane</keyword>
<keyword id="KW-0472">Membrane</keyword>
<keyword id="KW-0571">Peptide transport</keyword>
<keyword id="KW-0653">Protein transport</keyword>
<keyword id="KW-0812">Transmembrane</keyword>
<keyword id="KW-1133">Transmembrane helix</keyword>
<keyword id="KW-0813">Transport</keyword>
<accession>A4W9W3</accession>
<proteinExistence type="inferred from homology"/>
<dbReference type="EMBL" id="CP000653">
    <property type="protein sequence ID" value="ABP60493.1"/>
    <property type="molecule type" value="Genomic_DNA"/>
</dbReference>
<dbReference type="RefSeq" id="WP_012017208.1">
    <property type="nucleotide sequence ID" value="NC_009436.1"/>
</dbReference>
<dbReference type="SMR" id="A4W9W3"/>
<dbReference type="KEGG" id="ent:Ent638_1814"/>
<dbReference type="eggNOG" id="COG3104">
    <property type="taxonomic scope" value="Bacteria"/>
</dbReference>
<dbReference type="HOGENOM" id="CLU_004790_0_0_6"/>
<dbReference type="OrthoDB" id="9772725at2"/>
<dbReference type="Proteomes" id="UP000000230">
    <property type="component" value="Chromosome"/>
</dbReference>
<dbReference type="GO" id="GO:0005886">
    <property type="term" value="C:plasma membrane"/>
    <property type="evidence" value="ECO:0007669"/>
    <property type="project" value="UniProtKB-SubCell"/>
</dbReference>
<dbReference type="GO" id="GO:0071916">
    <property type="term" value="F:dipeptide transmembrane transporter activity"/>
    <property type="evidence" value="ECO:0007669"/>
    <property type="project" value="UniProtKB-UniRule"/>
</dbReference>
<dbReference type="GO" id="GO:0015333">
    <property type="term" value="F:peptide:proton symporter activity"/>
    <property type="evidence" value="ECO:0007669"/>
    <property type="project" value="UniProtKB-UniRule"/>
</dbReference>
<dbReference type="GO" id="GO:0042937">
    <property type="term" value="F:tripeptide transmembrane transporter activity"/>
    <property type="evidence" value="ECO:0007669"/>
    <property type="project" value="UniProtKB-UniRule"/>
</dbReference>
<dbReference type="GO" id="GO:0015031">
    <property type="term" value="P:protein transport"/>
    <property type="evidence" value="ECO:0007669"/>
    <property type="project" value="UniProtKB-KW"/>
</dbReference>
<dbReference type="CDD" id="cd17346">
    <property type="entry name" value="MFS_DtpA_like"/>
    <property type="match status" value="1"/>
</dbReference>
<dbReference type="FunFam" id="1.20.1250.20:FF:000017">
    <property type="entry name" value="Dipeptide and tripeptide permease A"/>
    <property type="match status" value="1"/>
</dbReference>
<dbReference type="Gene3D" id="1.20.1250.20">
    <property type="entry name" value="MFS general substrate transporter like domains"/>
    <property type="match status" value="1"/>
</dbReference>
<dbReference type="HAMAP" id="MF_01878">
    <property type="entry name" value="PTR2_DtpA_subfam"/>
    <property type="match status" value="1"/>
</dbReference>
<dbReference type="InterPro" id="IPR023517">
    <property type="entry name" value="AA/pep_transptr_DtpA"/>
</dbReference>
<dbReference type="InterPro" id="IPR005279">
    <property type="entry name" value="Dipep/tripep_permease"/>
</dbReference>
<dbReference type="InterPro" id="IPR020846">
    <property type="entry name" value="MFS_dom"/>
</dbReference>
<dbReference type="InterPro" id="IPR036259">
    <property type="entry name" value="MFS_trans_sf"/>
</dbReference>
<dbReference type="InterPro" id="IPR050171">
    <property type="entry name" value="MFS_Transporters"/>
</dbReference>
<dbReference type="InterPro" id="IPR000109">
    <property type="entry name" value="POT_fam"/>
</dbReference>
<dbReference type="InterPro" id="IPR018456">
    <property type="entry name" value="PTR2_symporter_CS"/>
</dbReference>
<dbReference type="NCBIfam" id="NF007137">
    <property type="entry name" value="PRK09584.1"/>
    <property type="match status" value="1"/>
</dbReference>
<dbReference type="NCBIfam" id="TIGR00924">
    <property type="entry name" value="yjdL_sub1_fam"/>
    <property type="match status" value="1"/>
</dbReference>
<dbReference type="PANTHER" id="PTHR23517:SF15">
    <property type="entry name" value="PROTON-DEPENDENT OLIGOPEPTIDE FAMILY TRANSPORT PROTEIN"/>
    <property type="match status" value="1"/>
</dbReference>
<dbReference type="PANTHER" id="PTHR23517">
    <property type="entry name" value="RESISTANCE PROTEIN MDTM, PUTATIVE-RELATED-RELATED"/>
    <property type="match status" value="1"/>
</dbReference>
<dbReference type="Pfam" id="PF00854">
    <property type="entry name" value="PTR2"/>
    <property type="match status" value="1"/>
</dbReference>
<dbReference type="SUPFAM" id="SSF103473">
    <property type="entry name" value="MFS general substrate transporter"/>
    <property type="match status" value="1"/>
</dbReference>
<dbReference type="PROSITE" id="PS50850">
    <property type="entry name" value="MFS"/>
    <property type="match status" value="1"/>
</dbReference>
<dbReference type="PROSITE" id="PS01022">
    <property type="entry name" value="PTR2_1"/>
    <property type="match status" value="1"/>
</dbReference>
<dbReference type="PROSITE" id="PS01023">
    <property type="entry name" value="PTR2_2"/>
    <property type="match status" value="1"/>
</dbReference>
<evidence type="ECO:0000255" key="1">
    <source>
        <dbReference type="HAMAP-Rule" id="MF_01878"/>
    </source>
</evidence>
<reference key="1">
    <citation type="journal article" date="2010" name="PLoS Genet.">
        <title>Genome sequence of the plant growth promoting endophytic bacterium Enterobacter sp. 638.</title>
        <authorList>
            <person name="Taghavi S."/>
            <person name="van der Lelie D."/>
            <person name="Hoffman A."/>
            <person name="Zhang Y.B."/>
            <person name="Walla M.D."/>
            <person name="Vangronsveld J."/>
            <person name="Newman L."/>
            <person name="Monchy S."/>
        </authorList>
    </citation>
    <scope>NUCLEOTIDE SEQUENCE [LARGE SCALE GENOMIC DNA]</scope>
    <source>
        <strain>638</strain>
    </source>
</reference>
<sequence length="502" mass="54236">MSTANNKPTDESVSLNAFKQPKAFYLIFSIELWERFGFYGLQGIMAVYLVKQLGMSEADSITLFSSFSALVYGLVAVGGWLGDKVLGTKRVIMLGAVVLAIGYGLVAWSGHDAAVVYMGMATIAVGNGLFKANPSSLLSTCYNKDDPRLDGAFTMYYMSINIGSFFSMLATPWLAAKFGWSVAFALSFVGMLITVVNFLFCRSWVKNYGSKPDFEPVHIGKLLATIVGVVILATIATWLLHNQGVARAVLGVVALGIICIFAKEAFAMQGAARRKMIVAFILMLQAVVFFVLYSQMPTSLNFFAIRNVEHSILSIAFEPEQFQALNPFWIMIGSPILAAIYNKMGDRLPMPHKFAIGMVLCSGAFLVLPLGTKFATDAGIVSVNWLILSYALQSIGELMISGLGLAMVAQLVPQRLMGFIMGSWFLTTAGAALIAGKIANLMAVPENVTDPLVSLEVYGRVFMQIGIATAVIAVLMLLTAPKLNRMTLEDDKAAKATDTATA</sequence>